<reference key="1">
    <citation type="journal article" date="2006" name="BMC Genomics">
        <title>The genome of the square archaeon Haloquadratum walsbyi: life at the limits of water activity.</title>
        <authorList>
            <person name="Bolhuis H."/>
            <person name="Palm P."/>
            <person name="Wende A."/>
            <person name="Falb M."/>
            <person name="Rampp M."/>
            <person name="Rodriguez-Valera F."/>
            <person name="Pfeiffer F."/>
            <person name="Oesterhelt D."/>
        </authorList>
    </citation>
    <scope>NUCLEOTIDE SEQUENCE [LARGE SCALE GENOMIC DNA]</scope>
    <source>
        <strain>DSM 16790 / HBSQ001</strain>
    </source>
</reference>
<comment type="function">
    <text evidence="1">Involved in protein export. The function of the beta subunit is unknown, but it may be involved in stabilization of the trimeric complex.</text>
</comment>
<comment type="subunit">
    <text evidence="1">Component of the protein translocase complex. Heterotrimer consisting of alpha (SecY), beta (SecG) and gamma (SecE) subunits. Can form oligomers of the heterotrimer.</text>
</comment>
<comment type="subcellular location">
    <subcellularLocation>
        <location evidence="1">Cell membrane</location>
        <topology evidence="1">Single-pass membrane protein</topology>
    </subcellularLocation>
</comment>
<comment type="similarity">
    <text evidence="1">Belongs to the SEC61-beta family.</text>
</comment>
<gene>
    <name evidence="1" type="primary">secG</name>
    <name type="ordered locus">HQ_1302A</name>
</gene>
<accession>Q18KL5</accession>
<dbReference type="EMBL" id="AM180088">
    <property type="protein sequence ID" value="CAJ51431.1"/>
    <property type="molecule type" value="Genomic_DNA"/>
</dbReference>
<dbReference type="RefSeq" id="WP_011570590.1">
    <property type="nucleotide sequence ID" value="NC_008212.1"/>
</dbReference>
<dbReference type="STRING" id="362976.HQ_1302A"/>
<dbReference type="GeneID" id="4194686"/>
<dbReference type="KEGG" id="hwa:HQ_1302A"/>
<dbReference type="eggNOG" id="arCOG02957">
    <property type="taxonomic scope" value="Archaea"/>
</dbReference>
<dbReference type="HOGENOM" id="CLU_208205_0_0_2"/>
<dbReference type="Proteomes" id="UP000001975">
    <property type="component" value="Chromosome"/>
</dbReference>
<dbReference type="GO" id="GO:0005886">
    <property type="term" value="C:plasma membrane"/>
    <property type="evidence" value="ECO:0007669"/>
    <property type="project" value="UniProtKB-SubCell"/>
</dbReference>
<dbReference type="GO" id="GO:0015031">
    <property type="term" value="P:protein transport"/>
    <property type="evidence" value="ECO:0007669"/>
    <property type="project" value="UniProtKB-UniRule"/>
</dbReference>
<dbReference type="HAMAP" id="MF_00751">
    <property type="entry name" value="SecG"/>
    <property type="match status" value="1"/>
</dbReference>
<dbReference type="InterPro" id="IPR023531">
    <property type="entry name" value="Preprot_translocase_SecG"/>
</dbReference>
<dbReference type="InterPro" id="IPR016482">
    <property type="entry name" value="SecG/Sec61-beta/Sbh"/>
</dbReference>
<dbReference type="NCBIfam" id="NF002318">
    <property type="entry name" value="PRK01253.1"/>
    <property type="match status" value="1"/>
</dbReference>
<dbReference type="Pfam" id="PF03911">
    <property type="entry name" value="Sec61_beta"/>
    <property type="match status" value="1"/>
</dbReference>
<keyword id="KW-1003">Cell membrane</keyword>
<keyword id="KW-0472">Membrane</keyword>
<keyword id="KW-0653">Protein transport</keyword>
<keyword id="KW-1185">Reference proteome</keyword>
<keyword id="KW-0811">Translocation</keyword>
<keyword id="KW-0812">Transmembrane</keyword>
<keyword id="KW-1133">Transmembrane helix</keyword>
<keyword id="KW-0813">Transport</keyword>
<feature type="chain" id="PRO_1000083499" description="Preprotein translocase subunit SecG">
    <location>
        <begin position="1"/>
        <end position="54"/>
    </location>
</feature>
<feature type="topological domain" description="Cytoplasmic" evidence="1">
    <location>
        <begin position="1"/>
        <end position="31"/>
    </location>
</feature>
<feature type="transmembrane region" description="Helical" evidence="1">
    <location>
        <begin position="32"/>
        <end position="53"/>
    </location>
</feature>
<feature type="topological domain" description="Extracellular" evidence="1">
    <location>
        <position position="54"/>
    </location>
</feature>
<organism>
    <name type="scientific">Haloquadratum walsbyi (strain DSM 16790 / HBSQ001)</name>
    <dbReference type="NCBI Taxonomy" id="362976"/>
    <lineage>
        <taxon>Archaea</taxon>
        <taxon>Methanobacteriati</taxon>
        <taxon>Methanobacteriota</taxon>
        <taxon>Stenosarchaea group</taxon>
        <taxon>Halobacteria</taxon>
        <taxon>Halobacteriales</taxon>
        <taxon>Haloferacaceae</taxon>
        <taxon>Haloquadratum</taxon>
    </lineage>
</organism>
<proteinExistence type="inferred from homology"/>
<sequence length="54" mass="5629">MSSGQNSGGLMSSAGLVRYFDAEDRNSIRIDPKTIVAFGVLFGVGVLVLNALAI</sequence>
<evidence type="ECO:0000255" key="1">
    <source>
        <dbReference type="HAMAP-Rule" id="MF_00751"/>
    </source>
</evidence>
<protein>
    <recommendedName>
        <fullName evidence="1">Preprotein translocase subunit SecG</fullName>
    </recommendedName>
    <alternativeName>
        <fullName evidence="1">Protein transport protein Sec61 subunit beta homolog</fullName>
    </alternativeName>
</protein>
<name>SECG_HALWD</name>